<reference key="1">
    <citation type="journal article" date="1995" name="Science">
        <title>Whole-genome random sequencing and assembly of Haemophilus influenzae Rd.</title>
        <authorList>
            <person name="Fleischmann R.D."/>
            <person name="Adams M.D."/>
            <person name="White O."/>
            <person name="Clayton R.A."/>
            <person name="Kirkness E.F."/>
            <person name="Kerlavage A.R."/>
            <person name="Bult C.J."/>
            <person name="Tomb J.-F."/>
            <person name="Dougherty B.A."/>
            <person name="Merrick J.M."/>
            <person name="McKenney K."/>
            <person name="Sutton G.G."/>
            <person name="FitzHugh W."/>
            <person name="Fields C.A."/>
            <person name="Gocayne J.D."/>
            <person name="Scott J.D."/>
            <person name="Shirley R."/>
            <person name="Liu L.-I."/>
            <person name="Glodek A."/>
            <person name="Kelley J.M."/>
            <person name="Weidman J.F."/>
            <person name="Phillips C.A."/>
            <person name="Spriggs T."/>
            <person name="Hedblom E."/>
            <person name="Cotton M.D."/>
            <person name="Utterback T.R."/>
            <person name="Hanna M.C."/>
            <person name="Nguyen D.T."/>
            <person name="Saudek D.M."/>
            <person name="Brandon R.C."/>
            <person name="Fine L.D."/>
            <person name="Fritchman J.L."/>
            <person name="Fuhrmann J.L."/>
            <person name="Geoghagen N.S.M."/>
            <person name="Gnehm C.L."/>
            <person name="McDonald L.A."/>
            <person name="Small K.V."/>
            <person name="Fraser C.M."/>
            <person name="Smith H.O."/>
            <person name="Venter J.C."/>
        </authorList>
    </citation>
    <scope>NUCLEOTIDE SEQUENCE [LARGE SCALE GENOMIC DNA]</scope>
    <source>
        <strain>ATCC 51907 / DSM 11121 / KW20 / Rd</strain>
    </source>
</reference>
<organism>
    <name type="scientific">Haemophilus influenzae (strain ATCC 51907 / DSM 11121 / KW20 / Rd)</name>
    <dbReference type="NCBI Taxonomy" id="71421"/>
    <lineage>
        <taxon>Bacteria</taxon>
        <taxon>Pseudomonadati</taxon>
        <taxon>Pseudomonadota</taxon>
        <taxon>Gammaproteobacteria</taxon>
        <taxon>Pasteurellales</taxon>
        <taxon>Pasteurellaceae</taxon>
        <taxon>Haemophilus</taxon>
    </lineage>
</organism>
<gene>
    <name type="ordered locus">HI_0293</name>
</gene>
<feature type="chain" id="PRO_0000098167" description="Probable heavy metal-dependent transcriptional regulator HI_0293">
    <location>
        <begin position="1"/>
        <end position="128"/>
    </location>
</feature>
<feature type="domain" description="HTH merR-type" evidence="2">
    <location>
        <begin position="1"/>
        <end position="69"/>
    </location>
</feature>
<feature type="DNA-binding region" description="H-T-H motif" evidence="2">
    <location>
        <begin position="4"/>
        <end position="23"/>
    </location>
</feature>
<comment type="function">
    <text>Could be a copper-dependent transcriptional activator of the ATPase HI_0290.</text>
</comment>
<comment type="subcellular location">
    <subcellularLocation>
        <location evidence="3">Cytoplasm</location>
    </subcellularLocation>
</comment>
<comment type="domain">
    <text evidence="1">It contains a N-terminal DNA binding region and a C-terminal metal binding region.</text>
</comment>
<name>Y293_HAEIN</name>
<dbReference type="EMBL" id="L42023">
    <property type="protein sequence ID" value="AAC21957.1"/>
    <property type="molecule type" value="Genomic_DNA"/>
</dbReference>
<dbReference type="PIR" id="I64059">
    <property type="entry name" value="I64059"/>
</dbReference>
<dbReference type="RefSeq" id="NP_438460.1">
    <property type="nucleotide sequence ID" value="NC_000907.1"/>
</dbReference>
<dbReference type="SMR" id="P44617"/>
<dbReference type="STRING" id="71421.HI_0293"/>
<dbReference type="EnsemblBacteria" id="AAC21957">
    <property type="protein sequence ID" value="AAC21957"/>
    <property type="gene ID" value="HI_0293"/>
</dbReference>
<dbReference type="KEGG" id="hin:HI_0293"/>
<dbReference type="PATRIC" id="fig|71421.8.peg.309"/>
<dbReference type="eggNOG" id="COG0789">
    <property type="taxonomic scope" value="Bacteria"/>
</dbReference>
<dbReference type="HOGENOM" id="CLU_060077_2_0_6"/>
<dbReference type="OrthoDB" id="9808480at2"/>
<dbReference type="PhylomeDB" id="P44617"/>
<dbReference type="BioCyc" id="HINF71421:G1GJ1-311-MONOMER"/>
<dbReference type="Proteomes" id="UP000000579">
    <property type="component" value="Chromosome"/>
</dbReference>
<dbReference type="GO" id="GO:0005737">
    <property type="term" value="C:cytoplasm"/>
    <property type="evidence" value="ECO:0007669"/>
    <property type="project" value="UniProtKB-SubCell"/>
</dbReference>
<dbReference type="GO" id="GO:0005507">
    <property type="term" value="F:copper ion binding"/>
    <property type="evidence" value="ECO:0007669"/>
    <property type="project" value="InterPro"/>
</dbReference>
<dbReference type="GO" id="GO:0003677">
    <property type="term" value="F:DNA binding"/>
    <property type="evidence" value="ECO:0007669"/>
    <property type="project" value="UniProtKB-KW"/>
</dbReference>
<dbReference type="GO" id="GO:0003700">
    <property type="term" value="F:DNA-binding transcription factor activity"/>
    <property type="evidence" value="ECO:0000318"/>
    <property type="project" value="GO_Central"/>
</dbReference>
<dbReference type="GO" id="GO:0045893">
    <property type="term" value="P:positive regulation of DNA-templated transcription"/>
    <property type="evidence" value="ECO:0000318"/>
    <property type="project" value="GO_Central"/>
</dbReference>
<dbReference type="CDD" id="cd01108">
    <property type="entry name" value="HTH_CueR"/>
    <property type="match status" value="1"/>
</dbReference>
<dbReference type="Gene3D" id="1.10.1660.10">
    <property type="match status" value="1"/>
</dbReference>
<dbReference type="InterPro" id="IPR011789">
    <property type="entry name" value="CueR"/>
</dbReference>
<dbReference type="InterPro" id="IPR009061">
    <property type="entry name" value="DNA-bd_dom_put_sf"/>
</dbReference>
<dbReference type="InterPro" id="IPR000551">
    <property type="entry name" value="MerR-type_HTH_dom"/>
</dbReference>
<dbReference type="InterPro" id="IPR047057">
    <property type="entry name" value="MerR_fam"/>
</dbReference>
<dbReference type="InterPro" id="IPR015358">
    <property type="entry name" value="Tscrpt_reg_MerR_DNA-bd"/>
</dbReference>
<dbReference type="NCBIfam" id="TIGR02044">
    <property type="entry name" value="CueR"/>
    <property type="match status" value="1"/>
</dbReference>
<dbReference type="PANTHER" id="PTHR30204:SF94">
    <property type="entry name" value="HEAVY METAL-DEPENDENT TRANSCRIPTIONAL REGULATOR HI_0293-RELATED"/>
    <property type="match status" value="1"/>
</dbReference>
<dbReference type="PANTHER" id="PTHR30204">
    <property type="entry name" value="REDOX-CYCLING DRUG-SENSING TRANSCRIPTIONAL ACTIVATOR SOXR"/>
    <property type="match status" value="1"/>
</dbReference>
<dbReference type="Pfam" id="PF00376">
    <property type="entry name" value="MerR"/>
    <property type="match status" value="1"/>
</dbReference>
<dbReference type="Pfam" id="PF09278">
    <property type="entry name" value="MerR-DNA-bind"/>
    <property type="match status" value="1"/>
</dbReference>
<dbReference type="PRINTS" id="PR00040">
    <property type="entry name" value="HTHMERR"/>
</dbReference>
<dbReference type="SMART" id="SM00422">
    <property type="entry name" value="HTH_MERR"/>
    <property type="match status" value="1"/>
</dbReference>
<dbReference type="SUPFAM" id="SSF46955">
    <property type="entry name" value="Putative DNA-binding domain"/>
    <property type="match status" value="1"/>
</dbReference>
<dbReference type="PROSITE" id="PS00552">
    <property type="entry name" value="HTH_MERR_1"/>
    <property type="match status" value="1"/>
</dbReference>
<dbReference type="PROSITE" id="PS50937">
    <property type="entry name" value="HTH_MERR_2"/>
    <property type="match status" value="1"/>
</dbReference>
<protein>
    <recommendedName>
        <fullName>Probable heavy metal-dependent transcriptional regulator HI_0293</fullName>
    </recommendedName>
</protein>
<sequence length="128" mass="14589">MNISEAAKLVGLSTKQIRDYEKMGLIKPAVRSLSGYRNYGESDLERLHFIRHSRNVGFSLHQIAQLLALQDNPKRSCREVKVLTAQHIATLNQQIEQLQKMVQKLQHWHDSCQGNDNPECLILNGLNG</sequence>
<keyword id="KW-0010">Activator</keyword>
<keyword id="KW-0963">Cytoplasm</keyword>
<keyword id="KW-0238">DNA-binding</keyword>
<keyword id="KW-1185">Reference proteome</keyword>
<keyword id="KW-0804">Transcription</keyword>
<keyword id="KW-0805">Transcription regulation</keyword>
<proteinExistence type="inferred from homology"/>
<evidence type="ECO:0000250" key="1"/>
<evidence type="ECO:0000255" key="2">
    <source>
        <dbReference type="PROSITE-ProRule" id="PRU00254"/>
    </source>
</evidence>
<evidence type="ECO:0000305" key="3"/>
<accession>P44617</accession>